<proteinExistence type="inferred from homology"/>
<gene>
    <name evidence="1" type="primary">tyrS</name>
    <name type="ordered locus">SeD_A1894</name>
</gene>
<comment type="function">
    <text evidence="1">Catalyzes the attachment of tyrosine to tRNA(Tyr) in a two-step reaction: tyrosine is first activated by ATP to form Tyr-AMP and then transferred to the acceptor end of tRNA(Tyr).</text>
</comment>
<comment type="catalytic activity">
    <reaction evidence="1">
        <text>tRNA(Tyr) + L-tyrosine + ATP = L-tyrosyl-tRNA(Tyr) + AMP + diphosphate + H(+)</text>
        <dbReference type="Rhea" id="RHEA:10220"/>
        <dbReference type="Rhea" id="RHEA-COMP:9706"/>
        <dbReference type="Rhea" id="RHEA-COMP:9707"/>
        <dbReference type="ChEBI" id="CHEBI:15378"/>
        <dbReference type="ChEBI" id="CHEBI:30616"/>
        <dbReference type="ChEBI" id="CHEBI:33019"/>
        <dbReference type="ChEBI" id="CHEBI:58315"/>
        <dbReference type="ChEBI" id="CHEBI:78442"/>
        <dbReference type="ChEBI" id="CHEBI:78536"/>
        <dbReference type="ChEBI" id="CHEBI:456215"/>
        <dbReference type="EC" id="6.1.1.1"/>
    </reaction>
</comment>
<comment type="subunit">
    <text evidence="1">Homodimer.</text>
</comment>
<comment type="subcellular location">
    <subcellularLocation>
        <location evidence="1">Cytoplasm</location>
    </subcellularLocation>
</comment>
<comment type="similarity">
    <text evidence="1">Belongs to the class-I aminoacyl-tRNA synthetase family. TyrS type 1 subfamily.</text>
</comment>
<keyword id="KW-0030">Aminoacyl-tRNA synthetase</keyword>
<keyword id="KW-0067">ATP-binding</keyword>
<keyword id="KW-0963">Cytoplasm</keyword>
<keyword id="KW-0436">Ligase</keyword>
<keyword id="KW-0547">Nucleotide-binding</keyword>
<keyword id="KW-0648">Protein biosynthesis</keyword>
<keyword id="KW-0694">RNA-binding</keyword>
<name>SYY_SALDC</name>
<organism>
    <name type="scientific">Salmonella dublin (strain CT_02021853)</name>
    <dbReference type="NCBI Taxonomy" id="439851"/>
    <lineage>
        <taxon>Bacteria</taxon>
        <taxon>Pseudomonadati</taxon>
        <taxon>Pseudomonadota</taxon>
        <taxon>Gammaproteobacteria</taxon>
        <taxon>Enterobacterales</taxon>
        <taxon>Enterobacteriaceae</taxon>
        <taxon>Salmonella</taxon>
    </lineage>
</organism>
<evidence type="ECO:0000255" key="1">
    <source>
        <dbReference type="HAMAP-Rule" id="MF_02006"/>
    </source>
</evidence>
<protein>
    <recommendedName>
        <fullName evidence="1">Tyrosine--tRNA ligase</fullName>
        <ecNumber evidence="1">6.1.1.1</ecNumber>
    </recommendedName>
    <alternativeName>
        <fullName evidence="1">Tyrosyl-tRNA synthetase</fullName>
        <shortName evidence="1">TyrRS</shortName>
    </alternativeName>
</protein>
<reference key="1">
    <citation type="journal article" date="2011" name="J. Bacteriol.">
        <title>Comparative genomics of 28 Salmonella enterica isolates: evidence for CRISPR-mediated adaptive sublineage evolution.</title>
        <authorList>
            <person name="Fricke W.F."/>
            <person name="Mammel M.K."/>
            <person name="McDermott P.F."/>
            <person name="Tartera C."/>
            <person name="White D.G."/>
            <person name="Leclerc J.E."/>
            <person name="Ravel J."/>
            <person name="Cebula T.A."/>
        </authorList>
    </citation>
    <scope>NUCLEOTIDE SEQUENCE [LARGE SCALE GENOMIC DNA]</scope>
    <source>
        <strain>CT_02021853</strain>
    </source>
</reference>
<accession>B5FIF4</accession>
<dbReference type="EC" id="6.1.1.1" evidence="1"/>
<dbReference type="EMBL" id="CP001144">
    <property type="protein sequence ID" value="ACH76765.1"/>
    <property type="molecule type" value="Genomic_DNA"/>
</dbReference>
<dbReference type="RefSeq" id="WP_000168626.1">
    <property type="nucleotide sequence ID" value="NC_011205.1"/>
</dbReference>
<dbReference type="SMR" id="B5FIF4"/>
<dbReference type="KEGG" id="sed:SeD_A1894"/>
<dbReference type="HOGENOM" id="CLU_024003_0_3_6"/>
<dbReference type="Proteomes" id="UP000008322">
    <property type="component" value="Chromosome"/>
</dbReference>
<dbReference type="GO" id="GO:0005829">
    <property type="term" value="C:cytosol"/>
    <property type="evidence" value="ECO:0007669"/>
    <property type="project" value="TreeGrafter"/>
</dbReference>
<dbReference type="GO" id="GO:0005524">
    <property type="term" value="F:ATP binding"/>
    <property type="evidence" value="ECO:0007669"/>
    <property type="project" value="UniProtKB-UniRule"/>
</dbReference>
<dbReference type="GO" id="GO:0003723">
    <property type="term" value="F:RNA binding"/>
    <property type="evidence" value="ECO:0007669"/>
    <property type="project" value="UniProtKB-KW"/>
</dbReference>
<dbReference type="GO" id="GO:0004831">
    <property type="term" value="F:tyrosine-tRNA ligase activity"/>
    <property type="evidence" value="ECO:0007669"/>
    <property type="project" value="UniProtKB-UniRule"/>
</dbReference>
<dbReference type="GO" id="GO:0006437">
    <property type="term" value="P:tyrosyl-tRNA aminoacylation"/>
    <property type="evidence" value="ECO:0007669"/>
    <property type="project" value="UniProtKB-UniRule"/>
</dbReference>
<dbReference type="CDD" id="cd00165">
    <property type="entry name" value="S4"/>
    <property type="match status" value="1"/>
</dbReference>
<dbReference type="CDD" id="cd00805">
    <property type="entry name" value="TyrRS_core"/>
    <property type="match status" value="1"/>
</dbReference>
<dbReference type="FunFam" id="1.10.240.10:FF:000001">
    <property type="entry name" value="Tyrosine--tRNA ligase"/>
    <property type="match status" value="1"/>
</dbReference>
<dbReference type="FunFam" id="3.10.290.10:FF:000007">
    <property type="entry name" value="Tyrosine--tRNA ligase"/>
    <property type="match status" value="1"/>
</dbReference>
<dbReference type="FunFam" id="3.40.50.620:FF:000008">
    <property type="entry name" value="Tyrosine--tRNA ligase"/>
    <property type="match status" value="1"/>
</dbReference>
<dbReference type="Gene3D" id="3.40.50.620">
    <property type="entry name" value="HUPs"/>
    <property type="match status" value="1"/>
</dbReference>
<dbReference type="Gene3D" id="3.10.290.10">
    <property type="entry name" value="RNA-binding S4 domain"/>
    <property type="match status" value="1"/>
</dbReference>
<dbReference type="Gene3D" id="1.10.240.10">
    <property type="entry name" value="Tyrosyl-Transfer RNA Synthetase"/>
    <property type="match status" value="1"/>
</dbReference>
<dbReference type="HAMAP" id="MF_02006">
    <property type="entry name" value="Tyr_tRNA_synth_type1"/>
    <property type="match status" value="1"/>
</dbReference>
<dbReference type="InterPro" id="IPR001412">
    <property type="entry name" value="aa-tRNA-synth_I_CS"/>
</dbReference>
<dbReference type="InterPro" id="IPR002305">
    <property type="entry name" value="aa-tRNA-synth_Ic"/>
</dbReference>
<dbReference type="InterPro" id="IPR014729">
    <property type="entry name" value="Rossmann-like_a/b/a_fold"/>
</dbReference>
<dbReference type="InterPro" id="IPR002942">
    <property type="entry name" value="S4_RNA-bd"/>
</dbReference>
<dbReference type="InterPro" id="IPR036986">
    <property type="entry name" value="S4_RNA-bd_sf"/>
</dbReference>
<dbReference type="InterPro" id="IPR054608">
    <property type="entry name" value="SYY-like_C"/>
</dbReference>
<dbReference type="InterPro" id="IPR002307">
    <property type="entry name" value="Tyr-tRNA-ligase"/>
</dbReference>
<dbReference type="InterPro" id="IPR024088">
    <property type="entry name" value="Tyr-tRNA-ligase_bac-type"/>
</dbReference>
<dbReference type="InterPro" id="IPR024107">
    <property type="entry name" value="Tyr-tRNA-ligase_bac_1"/>
</dbReference>
<dbReference type="NCBIfam" id="TIGR00234">
    <property type="entry name" value="tyrS"/>
    <property type="match status" value="1"/>
</dbReference>
<dbReference type="PANTHER" id="PTHR11766:SF0">
    <property type="entry name" value="TYROSINE--TRNA LIGASE, MITOCHONDRIAL"/>
    <property type="match status" value="1"/>
</dbReference>
<dbReference type="PANTHER" id="PTHR11766">
    <property type="entry name" value="TYROSYL-TRNA SYNTHETASE"/>
    <property type="match status" value="1"/>
</dbReference>
<dbReference type="Pfam" id="PF22421">
    <property type="entry name" value="SYY_C-terminal"/>
    <property type="match status" value="1"/>
</dbReference>
<dbReference type="Pfam" id="PF00579">
    <property type="entry name" value="tRNA-synt_1b"/>
    <property type="match status" value="1"/>
</dbReference>
<dbReference type="PRINTS" id="PR01040">
    <property type="entry name" value="TRNASYNTHTYR"/>
</dbReference>
<dbReference type="SMART" id="SM00363">
    <property type="entry name" value="S4"/>
    <property type="match status" value="1"/>
</dbReference>
<dbReference type="SUPFAM" id="SSF55174">
    <property type="entry name" value="Alpha-L RNA-binding motif"/>
    <property type="match status" value="1"/>
</dbReference>
<dbReference type="SUPFAM" id="SSF52374">
    <property type="entry name" value="Nucleotidylyl transferase"/>
    <property type="match status" value="1"/>
</dbReference>
<dbReference type="PROSITE" id="PS00178">
    <property type="entry name" value="AA_TRNA_LIGASE_I"/>
    <property type="match status" value="1"/>
</dbReference>
<dbReference type="PROSITE" id="PS50889">
    <property type="entry name" value="S4"/>
    <property type="match status" value="1"/>
</dbReference>
<feature type="chain" id="PRO_1000189322" description="Tyrosine--tRNA ligase">
    <location>
        <begin position="1"/>
        <end position="424"/>
    </location>
</feature>
<feature type="domain" description="S4 RNA-binding" evidence="1">
    <location>
        <begin position="357"/>
        <end position="414"/>
    </location>
</feature>
<feature type="short sequence motif" description="'HIGH' region">
    <location>
        <begin position="42"/>
        <end position="51"/>
    </location>
</feature>
<feature type="short sequence motif" description="'KMSKS' region">
    <location>
        <begin position="235"/>
        <end position="239"/>
    </location>
</feature>
<feature type="binding site" evidence="1">
    <location>
        <position position="37"/>
    </location>
    <ligand>
        <name>L-tyrosine</name>
        <dbReference type="ChEBI" id="CHEBI:58315"/>
    </ligand>
</feature>
<feature type="binding site" evidence="1">
    <location>
        <position position="175"/>
    </location>
    <ligand>
        <name>L-tyrosine</name>
        <dbReference type="ChEBI" id="CHEBI:58315"/>
    </ligand>
</feature>
<feature type="binding site" evidence="1">
    <location>
        <position position="179"/>
    </location>
    <ligand>
        <name>L-tyrosine</name>
        <dbReference type="ChEBI" id="CHEBI:58315"/>
    </ligand>
</feature>
<feature type="binding site" evidence="1">
    <location>
        <position position="238"/>
    </location>
    <ligand>
        <name>ATP</name>
        <dbReference type="ChEBI" id="CHEBI:30616"/>
    </ligand>
</feature>
<sequence length="424" mass="47282">MASSNLIKQLQERGLVAQVTDEDALAERLAQGPIALYCGFDPTADSLHLGHLVPLLCLKRFQQAGHKPVALVGGATGLIGDPSFKAAERKLNTEETVQEWVAKIRKQVAPFLDFDCGENSAIAANNYDWFGSMNVLTFLRDIGKHFSVNQMINKEAVKQRLNRDDQGISFTEFSYNLLQGYDFACLNKLHGVALQIGGSDQWGNITSGIDLTRRLHQNQVFGLTVPLITKADGTKFGKTEGGAVWLDPKKTSPYKFYQFWINTADADVYRFLKFFTFMDIEEINALEEEDKNSGKAPRAQYVLAEQVTRLVHGEEGLVAAKRITECLFSGSLSALSEADFEQLAQDGVPMVEMEKGADLMQALVDAELQPSRGQARKTIASNAVTINGEKQSDPEYIFNDEDRLFGRYTLLRRGKKNYCLICWK</sequence>